<comment type="function">
    <text evidence="1">Specifically binds 5-hydroxymethylcytosine (5hmC), suggesting that it acts as a specific reader of 5hmC.</text>
</comment>
<comment type="subunit">
    <text evidence="1">Interacts with CUL4A and/or CUL4B.</text>
</comment>
<comment type="similarity">
    <text evidence="3">Belongs to the WD repeat DDB2/WDR76 family.</text>
</comment>
<proteinExistence type="inferred from homology"/>
<feature type="chain" id="PRO_0000351093" description="WD repeat-containing protein 76">
    <location>
        <begin position="1"/>
        <end position="626"/>
    </location>
</feature>
<feature type="repeat" description="WD 1">
    <location>
        <begin position="311"/>
        <end position="352"/>
    </location>
</feature>
<feature type="repeat" description="WD 2">
    <location>
        <begin position="358"/>
        <end position="400"/>
    </location>
</feature>
<feature type="repeat" description="WD 3">
    <location>
        <begin position="402"/>
        <end position="441"/>
    </location>
</feature>
<feature type="repeat" description="WD 4">
    <location>
        <begin position="446"/>
        <end position="485"/>
    </location>
</feature>
<feature type="repeat" description="WD 5">
    <location>
        <begin position="493"/>
        <end position="533"/>
    </location>
</feature>
<feature type="repeat" description="WD 6">
    <location>
        <begin position="535"/>
        <end position="565"/>
    </location>
</feature>
<feature type="repeat" description="WD 7">
    <location>
        <begin position="590"/>
        <end position="626"/>
    </location>
</feature>
<feature type="region of interest" description="Disordered" evidence="2">
    <location>
        <begin position="1"/>
        <end position="20"/>
    </location>
</feature>
<feature type="region of interest" description="Disordered" evidence="2">
    <location>
        <begin position="97"/>
        <end position="161"/>
    </location>
</feature>
<feature type="region of interest" description="Disordered" evidence="2">
    <location>
        <begin position="194"/>
        <end position="213"/>
    </location>
</feature>
<feature type="compositionally biased region" description="Low complexity" evidence="2">
    <location>
        <begin position="97"/>
        <end position="108"/>
    </location>
</feature>
<feature type="compositionally biased region" description="Polar residues" evidence="2">
    <location>
        <begin position="109"/>
        <end position="123"/>
    </location>
</feature>
<feature type="compositionally biased region" description="Acidic residues" evidence="2">
    <location>
        <begin position="140"/>
        <end position="150"/>
    </location>
</feature>
<feature type="compositionally biased region" description="Basic residues" evidence="2">
    <location>
        <begin position="199"/>
        <end position="208"/>
    </location>
</feature>
<accession>A9X1C6</accession>
<reference key="1">
    <citation type="submission" date="2007-12" db="EMBL/GenBank/DDBJ databases">
        <title>NISC comparative sequencing initiative.</title>
        <authorList>
            <person name="Antonellis A."/>
            <person name="Benjamin B."/>
            <person name="Blakesley R.W."/>
            <person name="Bouffard G.G."/>
            <person name="Brinkley C."/>
            <person name="Brooks S."/>
            <person name="Chu G."/>
            <person name="Chub I."/>
            <person name="Coleman H."/>
            <person name="Fuksenko T."/>
            <person name="Gestole M."/>
            <person name="Gregory M."/>
            <person name="Guan X."/>
            <person name="Gupta J."/>
            <person name="Gurson N."/>
            <person name="Han E."/>
            <person name="Han J."/>
            <person name="Hansen N."/>
            <person name="Hargrove A."/>
            <person name="Hines-Harris K."/>
            <person name="Ho S.-L."/>
            <person name="Hu P."/>
            <person name="Hunter G."/>
            <person name="Hurle B."/>
            <person name="Idol J.R."/>
            <person name="Johnson T."/>
            <person name="Knight E."/>
            <person name="Kwong P."/>
            <person name="Lee-Lin S.-Q."/>
            <person name="Legaspi R."/>
            <person name="Madden M."/>
            <person name="Maduro Q.L."/>
            <person name="Maduro V.B."/>
            <person name="Margulies E.H."/>
            <person name="Masiello C."/>
            <person name="Maskeri B."/>
            <person name="McDowell J."/>
            <person name="Merkulov G."/>
            <person name="Montemayor C."/>
            <person name="Mullikin J.C."/>
            <person name="Park M."/>
            <person name="Prasad A."/>
            <person name="Ramsahoye C."/>
            <person name="Reddix-Dugue N."/>
            <person name="Riebow N."/>
            <person name="Schandler K."/>
            <person name="Schueler M.G."/>
            <person name="Sison C."/>
            <person name="Smith L."/>
            <person name="Stantripop S."/>
            <person name="Thomas J.W."/>
            <person name="Thomas P.J."/>
            <person name="Tsipouri V."/>
            <person name="Young A."/>
            <person name="Green E.D."/>
        </authorList>
    </citation>
    <scope>NUCLEOTIDE SEQUENCE [LARGE SCALE GENOMIC DNA]</scope>
</reference>
<evidence type="ECO:0000250" key="1"/>
<evidence type="ECO:0000256" key="2">
    <source>
        <dbReference type="SAM" id="MobiDB-lite"/>
    </source>
</evidence>
<evidence type="ECO:0000305" key="3"/>
<organism>
    <name type="scientific">Papio anubis</name>
    <name type="common">Olive baboon</name>
    <dbReference type="NCBI Taxonomy" id="9555"/>
    <lineage>
        <taxon>Eukaryota</taxon>
        <taxon>Metazoa</taxon>
        <taxon>Chordata</taxon>
        <taxon>Craniata</taxon>
        <taxon>Vertebrata</taxon>
        <taxon>Euteleostomi</taxon>
        <taxon>Mammalia</taxon>
        <taxon>Eutheria</taxon>
        <taxon>Euarchontoglires</taxon>
        <taxon>Primates</taxon>
        <taxon>Haplorrhini</taxon>
        <taxon>Catarrhini</taxon>
        <taxon>Cercopithecidae</taxon>
        <taxon>Cercopithecinae</taxon>
        <taxon>Papio</taxon>
    </lineage>
</organism>
<protein>
    <recommendedName>
        <fullName>WD repeat-containing protein 76</fullName>
    </recommendedName>
</protein>
<sequence length="626" mass="69678">MSRSGAAAEKADSRQRPQMKVNEYKENQNIAYVSLRPVQTTVLIKTAKVYLAPFSLSNYQLDQLMCPKSLLEKNSNNEVACKKTKIKKTCSRIIPPKMKTTSSKSESTLQNSASAVHTESNKLQPKRTADAMNLSVDVESSQDEDSDEDITPGLDDFSGLSPYERKRLKNISENADFFASLQLSESAARLREIIEKRQPPKSKRKKPKRENGVGCRRSMRLLKVDPSGVSLPATPTPPTLVADETPLLPPGPLEMTSENQEDNERFKGFLHTWAGMNKPSSKNTEKGLSSIKSYRANLNGMVISEDTVYKVTTGPIFSMALHPSETRTLVAVGAKFGQVGLCDLTQQPKEDGVYVFHPHSQPVSCLYFSPANPAHILSLSYDGTLRCGDFSRAIFEEVYRNERSSFSSFDFLSEDASTLIVGHWDGNMSLVDRRTPGTSYEKLTSSSMGKIRTVHVHPVHRQYFITAGLRDTHIYDARQLKSRGSQPLISLTEHTKSIASAYFSPLTGNRVVTTCADCNLRIFDSSCVSSKIPLLTTIRHNTFTGRWLTRFQAMWDPKQEDCVIVGSMAHPRRVEIFHETGKRVHSFGGECLVSVCSINAMHPTRYILAGGNSSGKIHVFMNEKSC</sequence>
<gene>
    <name type="primary">WDR76</name>
</gene>
<name>WDR76_PAPAN</name>
<keyword id="KW-1185">Reference proteome</keyword>
<keyword id="KW-0677">Repeat</keyword>
<keyword id="KW-0853">WD repeat</keyword>
<dbReference type="EMBL" id="DP000543">
    <property type="protein sequence ID" value="ABY40821.1"/>
    <property type="molecule type" value="Genomic_DNA"/>
</dbReference>
<dbReference type="RefSeq" id="NP_001162443.1">
    <property type="nucleotide sequence ID" value="NM_001168972.1"/>
</dbReference>
<dbReference type="SMR" id="A9X1C6"/>
<dbReference type="STRING" id="9555.ENSPANP00000017416"/>
<dbReference type="GeneID" id="100137438"/>
<dbReference type="KEGG" id="panu:100137438"/>
<dbReference type="CTD" id="79968"/>
<dbReference type="eggNOG" id="KOG4328">
    <property type="taxonomic scope" value="Eukaryota"/>
</dbReference>
<dbReference type="OrthoDB" id="9266at314294"/>
<dbReference type="Proteomes" id="UP000028761">
    <property type="component" value="Unplaced"/>
</dbReference>
<dbReference type="GO" id="GO:0000792">
    <property type="term" value="C:heterochromatin"/>
    <property type="evidence" value="ECO:0000250"/>
    <property type="project" value="UniProtKB"/>
</dbReference>
<dbReference type="GO" id="GO:0005634">
    <property type="term" value="C:nucleus"/>
    <property type="evidence" value="ECO:0000250"/>
    <property type="project" value="UniProtKB"/>
</dbReference>
<dbReference type="GO" id="GO:0090734">
    <property type="term" value="C:site of DNA damage"/>
    <property type="evidence" value="ECO:0000250"/>
    <property type="project" value="UniProtKB"/>
</dbReference>
<dbReference type="GO" id="GO:0003677">
    <property type="term" value="F:DNA binding"/>
    <property type="evidence" value="ECO:0007669"/>
    <property type="project" value="TreeGrafter"/>
</dbReference>
<dbReference type="GO" id="GO:0006974">
    <property type="term" value="P:DNA damage response"/>
    <property type="evidence" value="ECO:0000250"/>
    <property type="project" value="UniProtKB"/>
</dbReference>
<dbReference type="GO" id="GO:2000001">
    <property type="term" value="P:regulation of DNA damage checkpoint"/>
    <property type="evidence" value="ECO:0007669"/>
    <property type="project" value="TreeGrafter"/>
</dbReference>
<dbReference type="FunFam" id="2.130.10.10:FF:000180">
    <property type="entry name" value="WD repeat-containing protein 76"/>
    <property type="match status" value="1"/>
</dbReference>
<dbReference type="Gene3D" id="2.130.10.10">
    <property type="entry name" value="YVTN repeat-like/Quinoprotein amine dehydrogenase"/>
    <property type="match status" value="1"/>
</dbReference>
<dbReference type="InterPro" id="IPR015943">
    <property type="entry name" value="WD40/YVTN_repeat-like_dom_sf"/>
</dbReference>
<dbReference type="InterPro" id="IPR036322">
    <property type="entry name" value="WD40_repeat_dom_sf"/>
</dbReference>
<dbReference type="InterPro" id="IPR001680">
    <property type="entry name" value="WD40_rpt"/>
</dbReference>
<dbReference type="InterPro" id="IPR050853">
    <property type="entry name" value="WD_repeat_DNA-damage-binding"/>
</dbReference>
<dbReference type="PANTHER" id="PTHR14773">
    <property type="entry name" value="WD REPEAT-CONTAINING PROTEIN 76"/>
    <property type="match status" value="1"/>
</dbReference>
<dbReference type="PANTHER" id="PTHR14773:SF0">
    <property type="entry name" value="WD REPEAT-CONTAINING PROTEIN 76"/>
    <property type="match status" value="1"/>
</dbReference>
<dbReference type="Pfam" id="PF00400">
    <property type="entry name" value="WD40"/>
    <property type="match status" value="2"/>
</dbReference>
<dbReference type="SMART" id="SM00320">
    <property type="entry name" value="WD40"/>
    <property type="match status" value="5"/>
</dbReference>
<dbReference type="SUPFAM" id="SSF50978">
    <property type="entry name" value="WD40 repeat-like"/>
    <property type="match status" value="1"/>
</dbReference>